<name>LPXK_METPP</name>
<protein>
    <recommendedName>
        <fullName evidence="1">Tetraacyldisaccharide 4'-kinase</fullName>
        <ecNumber evidence="1">2.7.1.130</ecNumber>
    </recommendedName>
    <alternativeName>
        <fullName evidence="1">Lipid A 4'-kinase</fullName>
    </alternativeName>
</protein>
<sequence>MNADPPRAPRRAPLEAFLTQQWLRRGPVAWALRPLAALYGAAVALRNRRYRLTPGRSVRVGRPVVVIGNRIAGGAGKTPTVIAVLAHLRRQGWQPGVVSRGHGRTALGVQAVAADTPADVVGDEPLLIHLRSGAPVVVGRDRVAAAAALLRARPEIDVIVADDGLQHRRLARDVEVVVFDARGAGNGWLLPAGPLREPIDTPTGAGTALVLYNADRPSTPLPGYATRRALTGAVALAAWWQGTPAAAATLASLRGRPVLACAGIAQPQRFFEQLRHAGLDVQEQALPDHAAFDALPWPAATPDVIVTEKDAVKLPVDRVRRERPGTRVWVAPLDFSPEPAFFAALDTALAPLSPRREG</sequence>
<proteinExistence type="inferred from homology"/>
<comment type="function">
    <text evidence="1">Transfers the gamma-phosphate of ATP to the 4'-position of a tetraacyldisaccharide 1-phosphate intermediate (termed DS-1-P) to form tetraacyldisaccharide 1,4'-bis-phosphate (lipid IVA).</text>
</comment>
<comment type="catalytic activity">
    <reaction evidence="1">
        <text>a lipid A disaccharide + ATP = a lipid IVA + ADP + H(+)</text>
        <dbReference type="Rhea" id="RHEA:67840"/>
        <dbReference type="ChEBI" id="CHEBI:15378"/>
        <dbReference type="ChEBI" id="CHEBI:30616"/>
        <dbReference type="ChEBI" id="CHEBI:176343"/>
        <dbReference type="ChEBI" id="CHEBI:176425"/>
        <dbReference type="ChEBI" id="CHEBI:456216"/>
        <dbReference type="EC" id="2.7.1.130"/>
    </reaction>
</comment>
<comment type="pathway">
    <text evidence="1">Glycolipid biosynthesis; lipid IV(A) biosynthesis; lipid IV(A) from (3R)-3-hydroxytetradecanoyl-[acyl-carrier-protein] and UDP-N-acetyl-alpha-D-glucosamine: step 6/6.</text>
</comment>
<comment type="similarity">
    <text evidence="1">Belongs to the LpxK family.</text>
</comment>
<dbReference type="EC" id="2.7.1.130" evidence="1"/>
<dbReference type="EMBL" id="CP000555">
    <property type="protein sequence ID" value="ABM95440.1"/>
    <property type="molecule type" value="Genomic_DNA"/>
</dbReference>
<dbReference type="RefSeq" id="WP_011830073.1">
    <property type="nucleotide sequence ID" value="NC_008825.1"/>
</dbReference>
<dbReference type="SMR" id="A2SIQ1"/>
<dbReference type="STRING" id="420662.Mpe_A2485"/>
<dbReference type="KEGG" id="mpt:Mpe_A2485"/>
<dbReference type="eggNOG" id="COG1663">
    <property type="taxonomic scope" value="Bacteria"/>
</dbReference>
<dbReference type="HOGENOM" id="CLU_038816_2_0_4"/>
<dbReference type="UniPathway" id="UPA00359">
    <property type="reaction ID" value="UER00482"/>
</dbReference>
<dbReference type="Proteomes" id="UP000000366">
    <property type="component" value="Chromosome"/>
</dbReference>
<dbReference type="GO" id="GO:0005886">
    <property type="term" value="C:plasma membrane"/>
    <property type="evidence" value="ECO:0007669"/>
    <property type="project" value="TreeGrafter"/>
</dbReference>
<dbReference type="GO" id="GO:0005524">
    <property type="term" value="F:ATP binding"/>
    <property type="evidence" value="ECO:0007669"/>
    <property type="project" value="UniProtKB-UniRule"/>
</dbReference>
<dbReference type="GO" id="GO:0009029">
    <property type="term" value="F:tetraacyldisaccharide 4'-kinase activity"/>
    <property type="evidence" value="ECO:0007669"/>
    <property type="project" value="UniProtKB-UniRule"/>
</dbReference>
<dbReference type="GO" id="GO:0009245">
    <property type="term" value="P:lipid A biosynthetic process"/>
    <property type="evidence" value="ECO:0007669"/>
    <property type="project" value="UniProtKB-UniRule"/>
</dbReference>
<dbReference type="GO" id="GO:0009244">
    <property type="term" value="P:lipopolysaccharide core region biosynthetic process"/>
    <property type="evidence" value="ECO:0007669"/>
    <property type="project" value="TreeGrafter"/>
</dbReference>
<dbReference type="HAMAP" id="MF_00409">
    <property type="entry name" value="LpxK"/>
    <property type="match status" value="1"/>
</dbReference>
<dbReference type="InterPro" id="IPR003758">
    <property type="entry name" value="LpxK"/>
</dbReference>
<dbReference type="InterPro" id="IPR027417">
    <property type="entry name" value="P-loop_NTPase"/>
</dbReference>
<dbReference type="NCBIfam" id="TIGR00682">
    <property type="entry name" value="lpxK"/>
    <property type="match status" value="1"/>
</dbReference>
<dbReference type="PANTHER" id="PTHR42724">
    <property type="entry name" value="TETRAACYLDISACCHARIDE 4'-KINASE"/>
    <property type="match status" value="1"/>
</dbReference>
<dbReference type="PANTHER" id="PTHR42724:SF1">
    <property type="entry name" value="TETRAACYLDISACCHARIDE 4'-KINASE, MITOCHONDRIAL-RELATED"/>
    <property type="match status" value="1"/>
</dbReference>
<dbReference type="Pfam" id="PF02606">
    <property type="entry name" value="LpxK"/>
    <property type="match status" value="1"/>
</dbReference>
<dbReference type="SUPFAM" id="SSF52540">
    <property type="entry name" value="P-loop containing nucleoside triphosphate hydrolases"/>
    <property type="match status" value="1"/>
</dbReference>
<keyword id="KW-0067">ATP-binding</keyword>
<keyword id="KW-0418">Kinase</keyword>
<keyword id="KW-0441">Lipid A biosynthesis</keyword>
<keyword id="KW-0444">Lipid biosynthesis</keyword>
<keyword id="KW-0443">Lipid metabolism</keyword>
<keyword id="KW-0547">Nucleotide-binding</keyword>
<keyword id="KW-1185">Reference proteome</keyword>
<keyword id="KW-0808">Transferase</keyword>
<reference key="1">
    <citation type="journal article" date="2007" name="J. Bacteriol.">
        <title>Whole-genome analysis of the methyl tert-butyl ether-degrading beta-proteobacterium Methylibium petroleiphilum PM1.</title>
        <authorList>
            <person name="Kane S.R."/>
            <person name="Chakicherla A.Y."/>
            <person name="Chain P.S.G."/>
            <person name="Schmidt R."/>
            <person name="Shin M.W."/>
            <person name="Legler T.C."/>
            <person name="Scow K.M."/>
            <person name="Larimer F.W."/>
            <person name="Lucas S.M."/>
            <person name="Richardson P.M."/>
            <person name="Hristova K.R."/>
        </authorList>
    </citation>
    <scope>NUCLEOTIDE SEQUENCE [LARGE SCALE GENOMIC DNA]</scope>
    <source>
        <strain>ATCC BAA-1232 / LMG 22953 / PM1</strain>
    </source>
</reference>
<gene>
    <name evidence="1" type="primary">lpxK</name>
    <name type="ordered locus">Mpe_A2485</name>
</gene>
<evidence type="ECO:0000255" key="1">
    <source>
        <dbReference type="HAMAP-Rule" id="MF_00409"/>
    </source>
</evidence>
<accession>A2SIQ1</accession>
<organism>
    <name type="scientific">Methylibium petroleiphilum (strain ATCC BAA-1232 / LMG 22953 / PM1)</name>
    <dbReference type="NCBI Taxonomy" id="420662"/>
    <lineage>
        <taxon>Bacteria</taxon>
        <taxon>Pseudomonadati</taxon>
        <taxon>Pseudomonadota</taxon>
        <taxon>Betaproteobacteria</taxon>
        <taxon>Burkholderiales</taxon>
        <taxon>Sphaerotilaceae</taxon>
        <taxon>Methylibium</taxon>
    </lineage>
</organism>
<feature type="chain" id="PRO_0000340841" description="Tetraacyldisaccharide 4'-kinase">
    <location>
        <begin position="1"/>
        <end position="358"/>
    </location>
</feature>
<feature type="binding site" evidence="1">
    <location>
        <begin position="71"/>
        <end position="78"/>
    </location>
    <ligand>
        <name>ATP</name>
        <dbReference type="ChEBI" id="CHEBI:30616"/>
    </ligand>
</feature>